<dbReference type="EMBL" id="CP000390">
    <property type="protein sequence ID" value="ABG64642.1"/>
    <property type="molecule type" value="Genomic_DNA"/>
</dbReference>
<dbReference type="SMR" id="Q11D83"/>
<dbReference type="STRING" id="266779.Meso_3270"/>
<dbReference type="KEGG" id="mes:Meso_3270"/>
<dbReference type="eggNOG" id="COG2835">
    <property type="taxonomic scope" value="Bacteria"/>
</dbReference>
<dbReference type="HOGENOM" id="CLU_155659_2_2_5"/>
<dbReference type="OrthoDB" id="9812205at2"/>
<dbReference type="GO" id="GO:0005829">
    <property type="term" value="C:cytosol"/>
    <property type="evidence" value="ECO:0007669"/>
    <property type="project" value="TreeGrafter"/>
</dbReference>
<dbReference type="FunFam" id="2.20.25.10:FF:000002">
    <property type="entry name" value="UPF0434 protein YcaR"/>
    <property type="match status" value="1"/>
</dbReference>
<dbReference type="Gene3D" id="2.20.25.10">
    <property type="match status" value="1"/>
</dbReference>
<dbReference type="HAMAP" id="MF_01187">
    <property type="entry name" value="UPF0434"/>
    <property type="match status" value="1"/>
</dbReference>
<dbReference type="InterPro" id="IPR005651">
    <property type="entry name" value="Trm112-like"/>
</dbReference>
<dbReference type="PANTHER" id="PTHR33505:SF4">
    <property type="entry name" value="PROTEIN PREY, MITOCHONDRIAL"/>
    <property type="match status" value="1"/>
</dbReference>
<dbReference type="PANTHER" id="PTHR33505">
    <property type="entry name" value="ZGC:162634"/>
    <property type="match status" value="1"/>
</dbReference>
<dbReference type="Pfam" id="PF03966">
    <property type="entry name" value="Trm112p"/>
    <property type="match status" value="1"/>
</dbReference>
<dbReference type="SUPFAM" id="SSF158997">
    <property type="entry name" value="Trm112p-like"/>
    <property type="match status" value="1"/>
</dbReference>
<comment type="similarity">
    <text evidence="1">Belongs to the UPF0434 family.</text>
</comment>
<gene>
    <name type="ordered locus">Meso_3270</name>
</gene>
<accession>Q11D83</accession>
<organism>
    <name type="scientific">Chelativorans sp. (strain BNC1)</name>
    <dbReference type="NCBI Taxonomy" id="266779"/>
    <lineage>
        <taxon>Bacteria</taxon>
        <taxon>Pseudomonadati</taxon>
        <taxon>Pseudomonadota</taxon>
        <taxon>Alphaproteobacteria</taxon>
        <taxon>Hyphomicrobiales</taxon>
        <taxon>Phyllobacteriaceae</taxon>
        <taxon>Chelativorans</taxon>
    </lineage>
</organism>
<evidence type="ECO:0000255" key="1">
    <source>
        <dbReference type="HAMAP-Rule" id="MF_01187"/>
    </source>
</evidence>
<proteinExistence type="inferred from homology"/>
<feature type="chain" id="PRO_0000291111" description="UPF0434 protein Meso_3270">
    <location>
        <begin position="1"/>
        <end position="71"/>
    </location>
</feature>
<name>Y3270_CHESB</name>
<sequence length="71" mass="7845">MTDGRRIERTSIDPKLLELLACPVTKGPLKWDPAKNELISAKAGLAYPVRDGVPVMLPGEARPLEPDKPRR</sequence>
<reference key="1">
    <citation type="submission" date="2006-06" db="EMBL/GenBank/DDBJ databases">
        <title>Complete sequence of chromosome of Mesorhizobium sp. BNC1.</title>
        <authorList>
            <consortium name="US DOE Joint Genome Institute"/>
            <person name="Copeland A."/>
            <person name="Lucas S."/>
            <person name="Lapidus A."/>
            <person name="Barry K."/>
            <person name="Detter J.C."/>
            <person name="Glavina del Rio T."/>
            <person name="Hammon N."/>
            <person name="Israni S."/>
            <person name="Dalin E."/>
            <person name="Tice H."/>
            <person name="Pitluck S."/>
            <person name="Chertkov O."/>
            <person name="Brettin T."/>
            <person name="Bruce D."/>
            <person name="Han C."/>
            <person name="Tapia R."/>
            <person name="Gilna P."/>
            <person name="Schmutz J."/>
            <person name="Larimer F."/>
            <person name="Land M."/>
            <person name="Hauser L."/>
            <person name="Kyrpides N."/>
            <person name="Mikhailova N."/>
            <person name="Richardson P."/>
        </authorList>
    </citation>
    <scope>NUCLEOTIDE SEQUENCE [LARGE SCALE GENOMIC DNA]</scope>
    <source>
        <strain>BNC1</strain>
    </source>
</reference>
<protein>
    <recommendedName>
        <fullName evidence="1">UPF0434 protein Meso_3270</fullName>
    </recommendedName>
</protein>